<name>DXS_SHIB3</name>
<gene>
    <name evidence="1" type="primary">dxs</name>
    <name type="ordered locus">SbBS512_E0341</name>
</gene>
<protein>
    <recommendedName>
        <fullName evidence="1">1-deoxy-D-xylulose-5-phosphate synthase</fullName>
        <ecNumber evidence="1">2.2.1.7</ecNumber>
    </recommendedName>
    <alternativeName>
        <fullName evidence="1">1-deoxyxylulose-5-phosphate synthase</fullName>
        <shortName evidence="1">DXP synthase</shortName>
        <shortName evidence="1">DXPS</shortName>
    </alternativeName>
</protein>
<accession>B2U4M3</accession>
<organism>
    <name type="scientific">Shigella boydii serotype 18 (strain CDC 3083-94 / BS512)</name>
    <dbReference type="NCBI Taxonomy" id="344609"/>
    <lineage>
        <taxon>Bacteria</taxon>
        <taxon>Pseudomonadati</taxon>
        <taxon>Pseudomonadota</taxon>
        <taxon>Gammaproteobacteria</taxon>
        <taxon>Enterobacterales</taxon>
        <taxon>Enterobacteriaceae</taxon>
        <taxon>Shigella</taxon>
    </lineage>
</organism>
<proteinExistence type="inferred from homology"/>
<evidence type="ECO:0000255" key="1">
    <source>
        <dbReference type="HAMAP-Rule" id="MF_00315"/>
    </source>
</evidence>
<comment type="function">
    <text evidence="1">Catalyzes the acyloin condensation reaction between C atoms 2 and 3 of pyruvate and glyceraldehyde 3-phosphate to yield 1-deoxy-D-xylulose-5-phosphate (DXP).</text>
</comment>
<comment type="catalytic activity">
    <reaction evidence="1">
        <text>D-glyceraldehyde 3-phosphate + pyruvate + H(+) = 1-deoxy-D-xylulose 5-phosphate + CO2</text>
        <dbReference type="Rhea" id="RHEA:12605"/>
        <dbReference type="ChEBI" id="CHEBI:15361"/>
        <dbReference type="ChEBI" id="CHEBI:15378"/>
        <dbReference type="ChEBI" id="CHEBI:16526"/>
        <dbReference type="ChEBI" id="CHEBI:57792"/>
        <dbReference type="ChEBI" id="CHEBI:59776"/>
        <dbReference type="EC" id="2.2.1.7"/>
    </reaction>
</comment>
<comment type="cofactor">
    <cofactor evidence="1">
        <name>Mg(2+)</name>
        <dbReference type="ChEBI" id="CHEBI:18420"/>
    </cofactor>
    <text evidence="1">Binds 1 Mg(2+) ion per subunit.</text>
</comment>
<comment type="cofactor">
    <cofactor evidence="1">
        <name>thiamine diphosphate</name>
        <dbReference type="ChEBI" id="CHEBI:58937"/>
    </cofactor>
    <text evidence="1">Binds 1 thiamine pyrophosphate per subunit.</text>
</comment>
<comment type="pathway">
    <text evidence="1">Metabolic intermediate biosynthesis; 1-deoxy-D-xylulose 5-phosphate biosynthesis; 1-deoxy-D-xylulose 5-phosphate from D-glyceraldehyde 3-phosphate and pyruvate: step 1/1.</text>
</comment>
<comment type="subunit">
    <text evidence="1">Homodimer.</text>
</comment>
<comment type="similarity">
    <text evidence="1">Belongs to the transketolase family. DXPS subfamily.</text>
</comment>
<dbReference type="EC" id="2.2.1.7" evidence="1"/>
<dbReference type="EMBL" id="CP001063">
    <property type="protein sequence ID" value="ACD08538.1"/>
    <property type="molecule type" value="Genomic_DNA"/>
</dbReference>
<dbReference type="RefSeq" id="WP_000006815.1">
    <property type="nucleotide sequence ID" value="NC_010658.1"/>
</dbReference>
<dbReference type="SMR" id="B2U4M3"/>
<dbReference type="STRING" id="344609.SbBS512_E0341"/>
<dbReference type="KEGG" id="sbc:SbBS512_E0341"/>
<dbReference type="HOGENOM" id="CLU_009227_1_4_6"/>
<dbReference type="UniPathway" id="UPA00064">
    <property type="reaction ID" value="UER00091"/>
</dbReference>
<dbReference type="Proteomes" id="UP000001030">
    <property type="component" value="Chromosome"/>
</dbReference>
<dbReference type="GO" id="GO:0005829">
    <property type="term" value="C:cytosol"/>
    <property type="evidence" value="ECO:0007669"/>
    <property type="project" value="TreeGrafter"/>
</dbReference>
<dbReference type="GO" id="GO:0008661">
    <property type="term" value="F:1-deoxy-D-xylulose-5-phosphate synthase activity"/>
    <property type="evidence" value="ECO:0007669"/>
    <property type="project" value="UniProtKB-UniRule"/>
</dbReference>
<dbReference type="GO" id="GO:0000287">
    <property type="term" value="F:magnesium ion binding"/>
    <property type="evidence" value="ECO:0007669"/>
    <property type="project" value="UniProtKB-UniRule"/>
</dbReference>
<dbReference type="GO" id="GO:0030976">
    <property type="term" value="F:thiamine pyrophosphate binding"/>
    <property type="evidence" value="ECO:0007669"/>
    <property type="project" value="UniProtKB-UniRule"/>
</dbReference>
<dbReference type="GO" id="GO:0052865">
    <property type="term" value="P:1-deoxy-D-xylulose 5-phosphate biosynthetic process"/>
    <property type="evidence" value="ECO:0007669"/>
    <property type="project" value="UniProtKB-UniPathway"/>
</dbReference>
<dbReference type="GO" id="GO:0019288">
    <property type="term" value="P:isopentenyl diphosphate biosynthetic process, methylerythritol 4-phosphate pathway"/>
    <property type="evidence" value="ECO:0007669"/>
    <property type="project" value="TreeGrafter"/>
</dbReference>
<dbReference type="GO" id="GO:0016114">
    <property type="term" value="P:terpenoid biosynthetic process"/>
    <property type="evidence" value="ECO:0007669"/>
    <property type="project" value="UniProtKB-UniRule"/>
</dbReference>
<dbReference type="GO" id="GO:0009228">
    <property type="term" value="P:thiamine biosynthetic process"/>
    <property type="evidence" value="ECO:0007669"/>
    <property type="project" value="UniProtKB-UniRule"/>
</dbReference>
<dbReference type="CDD" id="cd02007">
    <property type="entry name" value="TPP_DXS"/>
    <property type="match status" value="1"/>
</dbReference>
<dbReference type="CDD" id="cd07033">
    <property type="entry name" value="TPP_PYR_DXS_TK_like"/>
    <property type="match status" value="1"/>
</dbReference>
<dbReference type="FunFam" id="3.40.50.920:FF:000002">
    <property type="entry name" value="1-deoxy-D-xylulose-5-phosphate synthase"/>
    <property type="match status" value="1"/>
</dbReference>
<dbReference type="FunFam" id="3.40.50.970:FF:000005">
    <property type="entry name" value="1-deoxy-D-xylulose-5-phosphate synthase"/>
    <property type="match status" value="1"/>
</dbReference>
<dbReference type="Gene3D" id="3.40.50.920">
    <property type="match status" value="1"/>
</dbReference>
<dbReference type="Gene3D" id="3.40.50.970">
    <property type="match status" value="2"/>
</dbReference>
<dbReference type="HAMAP" id="MF_00315">
    <property type="entry name" value="DXP_synth"/>
    <property type="match status" value="1"/>
</dbReference>
<dbReference type="InterPro" id="IPR005477">
    <property type="entry name" value="Dxylulose-5-P_synthase"/>
</dbReference>
<dbReference type="InterPro" id="IPR029061">
    <property type="entry name" value="THDP-binding"/>
</dbReference>
<dbReference type="InterPro" id="IPR009014">
    <property type="entry name" value="Transketo_C/PFOR_II"/>
</dbReference>
<dbReference type="InterPro" id="IPR005475">
    <property type="entry name" value="Transketolase-like_Pyr-bd"/>
</dbReference>
<dbReference type="InterPro" id="IPR020826">
    <property type="entry name" value="Transketolase_BS"/>
</dbReference>
<dbReference type="InterPro" id="IPR033248">
    <property type="entry name" value="Transketolase_C"/>
</dbReference>
<dbReference type="InterPro" id="IPR049557">
    <property type="entry name" value="Transketolase_CS"/>
</dbReference>
<dbReference type="NCBIfam" id="TIGR00204">
    <property type="entry name" value="dxs"/>
    <property type="match status" value="1"/>
</dbReference>
<dbReference type="NCBIfam" id="NF003933">
    <property type="entry name" value="PRK05444.2-2"/>
    <property type="match status" value="1"/>
</dbReference>
<dbReference type="PANTHER" id="PTHR43322">
    <property type="entry name" value="1-D-DEOXYXYLULOSE 5-PHOSPHATE SYNTHASE-RELATED"/>
    <property type="match status" value="1"/>
</dbReference>
<dbReference type="PANTHER" id="PTHR43322:SF5">
    <property type="entry name" value="1-DEOXY-D-XYLULOSE-5-PHOSPHATE SYNTHASE, CHLOROPLASTIC"/>
    <property type="match status" value="1"/>
</dbReference>
<dbReference type="Pfam" id="PF13292">
    <property type="entry name" value="DXP_synthase_N"/>
    <property type="match status" value="1"/>
</dbReference>
<dbReference type="Pfam" id="PF02779">
    <property type="entry name" value="Transket_pyr"/>
    <property type="match status" value="1"/>
</dbReference>
<dbReference type="Pfam" id="PF02780">
    <property type="entry name" value="Transketolase_C"/>
    <property type="match status" value="1"/>
</dbReference>
<dbReference type="SMART" id="SM00861">
    <property type="entry name" value="Transket_pyr"/>
    <property type="match status" value="1"/>
</dbReference>
<dbReference type="SUPFAM" id="SSF52518">
    <property type="entry name" value="Thiamin diphosphate-binding fold (THDP-binding)"/>
    <property type="match status" value="2"/>
</dbReference>
<dbReference type="SUPFAM" id="SSF52922">
    <property type="entry name" value="TK C-terminal domain-like"/>
    <property type="match status" value="1"/>
</dbReference>
<dbReference type="PROSITE" id="PS00801">
    <property type="entry name" value="TRANSKETOLASE_1"/>
    <property type="match status" value="1"/>
</dbReference>
<dbReference type="PROSITE" id="PS00802">
    <property type="entry name" value="TRANSKETOLASE_2"/>
    <property type="match status" value="1"/>
</dbReference>
<reference key="1">
    <citation type="submission" date="2008-05" db="EMBL/GenBank/DDBJ databases">
        <title>Complete sequence of Shigella boydii serotype 18 strain BS512.</title>
        <authorList>
            <person name="Rasko D.A."/>
            <person name="Rosovitz M."/>
            <person name="Maurelli A.T."/>
            <person name="Myers G."/>
            <person name="Seshadri R."/>
            <person name="Cer R."/>
            <person name="Jiang L."/>
            <person name="Ravel J."/>
            <person name="Sebastian Y."/>
        </authorList>
    </citation>
    <scope>NUCLEOTIDE SEQUENCE [LARGE SCALE GENOMIC DNA]</scope>
    <source>
        <strain>CDC 3083-94 / BS512</strain>
    </source>
</reference>
<sequence length="620" mass="67603">MSFDIAKYPTLALVDSTQELRLLPKESLPKLCDELRRYLLDSVSRSSGHFASGLGTVELTVALHYVYNTPFDQLIWDVGHQAYPHKILTGRRDKIGTIRQKGGLHPFPWRGESEYDVLSVGHSSTSISAGIGIAVAAEKEGKNRRTVCVIGDGAITAGMAFEAMNHAGDIRPDMLVVLNDNEMSISENVGALNNHLAQLLSGKLYSSLREGGKKVFSGVPPIKELLKRTEEHIKGMVVPGTLFEELGFNYIGPVDGHDVLGLITTLKNMRDLKGPQFLHIMTKKGRGYEPAEKDPITFHAVPKFDPSSGCLPKSSGGLPSYSKIFGDWLCETAAKDNKLMAITPAMREGSGMVEFSRKFPDRYFDVAIAEQHAVTFAAGLAIGGYKPIVAIYSTFLQRAYDQVLHDVAIQKLPVLFAIDRAGIVGADGQTHQGAFDLSYLRCIPEMVIMTPSDENECRQMLYTGYHYNDGPSAVRYPRGNAVGVELTPLEKLPIGKGIVKRRGEKLAILNFGTLMPEAAKVAESLNATLVDMRFVKPLDEALILEMAASHEALVTVEENAIMGGAGSGVNEVLMAHRKPVPVLNIGLPDFFIPQGTQEEMRAELGLDAAGMEAKIKAWLA</sequence>
<keyword id="KW-0414">Isoprene biosynthesis</keyword>
<keyword id="KW-0460">Magnesium</keyword>
<keyword id="KW-0479">Metal-binding</keyword>
<keyword id="KW-1185">Reference proteome</keyword>
<keyword id="KW-0784">Thiamine biosynthesis</keyword>
<keyword id="KW-0786">Thiamine pyrophosphate</keyword>
<keyword id="KW-0808">Transferase</keyword>
<feature type="chain" id="PRO_1000115773" description="1-deoxy-D-xylulose-5-phosphate synthase">
    <location>
        <begin position="1"/>
        <end position="620"/>
    </location>
</feature>
<feature type="binding site" evidence="1">
    <location>
        <position position="80"/>
    </location>
    <ligand>
        <name>thiamine diphosphate</name>
        <dbReference type="ChEBI" id="CHEBI:58937"/>
    </ligand>
</feature>
<feature type="binding site" evidence="1">
    <location>
        <begin position="121"/>
        <end position="123"/>
    </location>
    <ligand>
        <name>thiamine diphosphate</name>
        <dbReference type="ChEBI" id="CHEBI:58937"/>
    </ligand>
</feature>
<feature type="binding site" evidence="1">
    <location>
        <position position="152"/>
    </location>
    <ligand>
        <name>Mg(2+)</name>
        <dbReference type="ChEBI" id="CHEBI:18420"/>
    </ligand>
</feature>
<feature type="binding site" evidence="1">
    <location>
        <begin position="153"/>
        <end position="154"/>
    </location>
    <ligand>
        <name>thiamine diphosphate</name>
        <dbReference type="ChEBI" id="CHEBI:58937"/>
    </ligand>
</feature>
<feature type="binding site" evidence="1">
    <location>
        <position position="181"/>
    </location>
    <ligand>
        <name>Mg(2+)</name>
        <dbReference type="ChEBI" id="CHEBI:18420"/>
    </ligand>
</feature>
<feature type="binding site" evidence="1">
    <location>
        <position position="181"/>
    </location>
    <ligand>
        <name>thiamine diphosphate</name>
        <dbReference type="ChEBI" id="CHEBI:58937"/>
    </ligand>
</feature>
<feature type="binding site" evidence="1">
    <location>
        <position position="288"/>
    </location>
    <ligand>
        <name>thiamine diphosphate</name>
        <dbReference type="ChEBI" id="CHEBI:58937"/>
    </ligand>
</feature>
<feature type="binding site" evidence="1">
    <location>
        <position position="370"/>
    </location>
    <ligand>
        <name>thiamine diphosphate</name>
        <dbReference type="ChEBI" id="CHEBI:58937"/>
    </ligand>
</feature>